<evidence type="ECO:0000255" key="1"/>
<keyword id="KW-1185">Reference proteome</keyword>
<keyword id="KW-0732">Signal</keyword>
<accession>P44103</accession>
<dbReference type="EMBL" id="L42023">
    <property type="protein sequence ID" value="AAC22710.1"/>
    <property type="molecule type" value="Genomic_DNA"/>
</dbReference>
<dbReference type="PIR" id="D64019">
    <property type="entry name" value="D64019"/>
</dbReference>
<dbReference type="RefSeq" id="NP_439207.1">
    <property type="nucleotide sequence ID" value="NC_000907.1"/>
</dbReference>
<dbReference type="SMR" id="P44103"/>
<dbReference type="STRING" id="71421.HI_1048"/>
<dbReference type="DNASU" id="949536"/>
<dbReference type="EnsemblBacteria" id="AAC22710">
    <property type="protein sequence ID" value="AAC22710"/>
    <property type="gene ID" value="HI_1048"/>
</dbReference>
<dbReference type="KEGG" id="hin:HI_1048"/>
<dbReference type="PATRIC" id="fig|71421.8.peg.1093"/>
<dbReference type="eggNOG" id="COG1305">
    <property type="taxonomic scope" value="Bacteria"/>
</dbReference>
<dbReference type="HOGENOM" id="CLU_057059_0_0_6"/>
<dbReference type="OrthoDB" id="9804872at2"/>
<dbReference type="PhylomeDB" id="P44103"/>
<dbReference type="BioCyc" id="HINF71421:G1GJ1-1087-MONOMER"/>
<dbReference type="Proteomes" id="UP000000579">
    <property type="component" value="Chromosome"/>
</dbReference>
<dbReference type="Gene3D" id="3.10.620.30">
    <property type="match status" value="1"/>
</dbReference>
<dbReference type="InterPro" id="IPR038765">
    <property type="entry name" value="Papain-like_cys_pep_sf"/>
</dbReference>
<dbReference type="InterPro" id="IPR002931">
    <property type="entry name" value="Transglutaminase-like"/>
</dbReference>
<dbReference type="PANTHER" id="PTHR38339">
    <property type="entry name" value="TRANSGLUTAMINASE DOMAIN PROTEIN"/>
    <property type="match status" value="1"/>
</dbReference>
<dbReference type="PANTHER" id="PTHR38339:SF1">
    <property type="entry name" value="TRANSGLUTAMINASE-LIKE DOMAIN-CONTAINING PROTEIN"/>
    <property type="match status" value="1"/>
</dbReference>
<dbReference type="Pfam" id="PF01841">
    <property type="entry name" value="Transglut_core"/>
    <property type="match status" value="1"/>
</dbReference>
<dbReference type="SMART" id="SM00460">
    <property type="entry name" value="TGc"/>
    <property type="match status" value="1"/>
</dbReference>
<dbReference type="SUPFAM" id="SSF54001">
    <property type="entry name" value="Cysteine proteinases"/>
    <property type="match status" value="1"/>
</dbReference>
<feature type="signal peptide" evidence="1">
    <location>
        <begin position="1"/>
        <end position="19"/>
    </location>
</feature>
<feature type="chain" id="PRO_0000013963" description="Uncharacterized protein HI_1048">
    <location>
        <begin position="20"/>
        <end position="369"/>
    </location>
</feature>
<name>Y1048_HAEIN</name>
<organism>
    <name type="scientific">Haemophilus influenzae (strain ATCC 51907 / DSM 11121 / KW20 / Rd)</name>
    <dbReference type="NCBI Taxonomy" id="71421"/>
    <lineage>
        <taxon>Bacteria</taxon>
        <taxon>Pseudomonadati</taxon>
        <taxon>Pseudomonadota</taxon>
        <taxon>Gammaproteobacteria</taxon>
        <taxon>Pasteurellales</taxon>
        <taxon>Pasteurellaceae</taxon>
        <taxon>Haemophilus</taxon>
    </lineage>
</organism>
<gene>
    <name type="ordered locus">HI_1048</name>
</gene>
<reference key="1">
    <citation type="journal article" date="1995" name="Science">
        <title>Whole-genome random sequencing and assembly of Haemophilus influenzae Rd.</title>
        <authorList>
            <person name="Fleischmann R.D."/>
            <person name="Adams M.D."/>
            <person name="White O."/>
            <person name="Clayton R.A."/>
            <person name="Kirkness E.F."/>
            <person name="Kerlavage A.R."/>
            <person name="Bult C.J."/>
            <person name="Tomb J.-F."/>
            <person name="Dougherty B.A."/>
            <person name="Merrick J.M."/>
            <person name="McKenney K."/>
            <person name="Sutton G.G."/>
            <person name="FitzHugh W."/>
            <person name="Fields C.A."/>
            <person name="Gocayne J.D."/>
            <person name="Scott J.D."/>
            <person name="Shirley R."/>
            <person name="Liu L.-I."/>
            <person name="Glodek A."/>
            <person name="Kelley J.M."/>
            <person name="Weidman J.F."/>
            <person name="Phillips C.A."/>
            <person name="Spriggs T."/>
            <person name="Hedblom E."/>
            <person name="Cotton M.D."/>
            <person name="Utterback T.R."/>
            <person name="Hanna M.C."/>
            <person name="Nguyen D.T."/>
            <person name="Saudek D.M."/>
            <person name="Brandon R.C."/>
            <person name="Fine L.D."/>
            <person name="Fritchman J.L."/>
            <person name="Fuhrmann J.L."/>
            <person name="Geoghagen N.S.M."/>
            <person name="Gnehm C.L."/>
            <person name="McDonald L.A."/>
            <person name="Small K.V."/>
            <person name="Fraser C.M."/>
            <person name="Smith H.O."/>
            <person name="Venter J.C."/>
        </authorList>
    </citation>
    <scope>NUCLEOTIDE SEQUENCE [LARGE SCALE GENOMIC DNA]</scope>
    <source>
        <strain>ATCC 51907 / DSM 11121 / KW20 / Rd</strain>
    </source>
</reference>
<reference key="2">
    <citation type="journal article" date="2000" name="Electrophoresis">
        <title>Two-dimensional map of the proteome of Haemophilus influenzae.</title>
        <authorList>
            <person name="Langen H."/>
            <person name="Takacs B."/>
            <person name="Evers S."/>
            <person name="Berndt P."/>
            <person name="Lahm H.W."/>
            <person name="Wipf B."/>
            <person name="Gray C."/>
            <person name="Fountoulakis M."/>
        </authorList>
    </citation>
    <scope>IDENTIFICATION BY MASS SPECTROMETRY</scope>
    <source>
        <strain>ATCC 51907 / DSM 11121 / KW20 / Rd</strain>
    </source>
</reference>
<protein>
    <recommendedName>
        <fullName>Uncharacterized protein HI_1048</fullName>
    </recommendedName>
</protein>
<proteinExistence type="evidence at protein level"/>
<sequence>MKKLIAVAVLSACGSLAHANTNIPNYNTDAHLYEFTQTYDLVVPKGSQGQTNLWVPLPFNGEYQQVKSIHFEGNYMNAYVTENNKYGAKTLFATWNKDAQKRDLKVMMVIETKDREPMVKGALENYTPPKDIQYSVDVQEYLKATPHIKTDGIVKEFPDKILGKETNPLKKAELIHHWFVKNMERDNSVLGCGDGDVEKILTTGVLKGKCTDINSVFVALARAAGIPAREIFGIRLGAAEKMGKYSKGAFGSANEQGIANVSGGQHCRAEFYLAGFGWVPVDSADVAKMRLAEKKSVEDKDTQAVAKYLFGNWEANWVGFNHARDFDLYPQPELAPINNFGYPYAEVGGDPLNSFDPKEFKYDYVSKKL</sequence>